<organism>
    <name type="scientific">Rippkaea orientalis (strain PCC 8801 / RF-1)</name>
    <name type="common">Cyanothece sp. (strain PCC 8801)</name>
    <dbReference type="NCBI Taxonomy" id="41431"/>
    <lineage>
        <taxon>Bacteria</taxon>
        <taxon>Bacillati</taxon>
        <taxon>Cyanobacteriota</taxon>
        <taxon>Cyanophyceae</taxon>
        <taxon>Oscillatoriophycideae</taxon>
        <taxon>Chroococcales</taxon>
        <taxon>Aphanothecaceae</taxon>
        <taxon>Rippkaea</taxon>
        <taxon>Rippkaea orientalis</taxon>
    </lineage>
</organism>
<feature type="chain" id="PRO_1000142385" description="Large ribosomal subunit protein uL5">
    <location>
        <begin position="1"/>
        <end position="180"/>
    </location>
</feature>
<gene>
    <name evidence="1" type="primary">rplE</name>
    <name evidence="1" type="synonym">rpl5</name>
    <name type="ordered locus">PCC8801_0240</name>
</gene>
<evidence type="ECO:0000255" key="1">
    <source>
        <dbReference type="HAMAP-Rule" id="MF_01333"/>
    </source>
</evidence>
<evidence type="ECO:0000305" key="2"/>
<protein>
    <recommendedName>
        <fullName evidence="1">Large ribosomal subunit protein uL5</fullName>
    </recommendedName>
    <alternativeName>
        <fullName evidence="2">50S ribosomal protein L5</fullName>
    </alternativeName>
</protein>
<reference key="1">
    <citation type="journal article" date="2011" name="MBio">
        <title>Novel metabolic attributes of the genus Cyanothece, comprising a group of unicellular nitrogen-fixing Cyanobacteria.</title>
        <authorList>
            <person name="Bandyopadhyay A."/>
            <person name="Elvitigala T."/>
            <person name="Welsh E."/>
            <person name="Stockel J."/>
            <person name="Liberton M."/>
            <person name="Min H."/>
            <person name="Sherman L.A."/>
            <person name="Pakrasi H.B."/>
        </authorList>
    </citation>
    <scope>NUCLEOTIDE SEQUENCE [LARGE SCALE GENOMIC DNA]</scope>
    <source>
        <strain>PCC 8801 / RF-1</strain>
    </source>
</reference>
<accession>B7K236</accession>
<comment type="function">
    <text evidence="1">This is one of the proteins that bind and probably mediate the attachment of the 5S RNA into the large ribosomal subunit, where it forms part of the central protuberance. In the 70S ribosome it contacts protein S13 of the 30S subunit (bridge B1b), connecting the 2 subunits; this bridge is implicated in subunit movement. Contacts the P site tRNA; the 5S rRNA and some of its associated proteins might help stabilize positioning of ribosome-bound tRNAs.</text>
</comment>
<comment type="subunit">
    <text evidence="1">Part of the 50S ribosomal subunit; part of the 5S rRNA/L5/L18/L25 subcomplex. Contacts the 5S rRNA and the P site tRNA. Forms a bridge to the 30S subunit in the 70S ribosome.</text>
</comment>
<comment type="similarity">
    <text evidence="1">Belongs to the universal ribosomal protein uL5 family.</text>
</comment>
<name>RL5_RIPO1</name>
<proteinExistence type="inferred from homology"/>
<sequence length="180" mass="20256">MPQRLKQVYQDTIVPKLTEQFSYKNPHEVPKVVKITVNRGLGEASQNAKALESSINELSTITGQKPVVTRAKKAIAGFKIRQGMPVGVMVTLRSDRMYAFLDRLINLALPRIRDFRGISAKSFDGRGNYSLGIREQLIFPEIDYDTIDQIRGMDVSIITTAQTDEEGRALLKELGMPFRT</sequence>
<dbReference type="EMBL" id="CP001287">
    <property type="protein sequence ID" value="ACK64343.1"/>
    <property type="molecule type" value="Genomic_DNA"/>
</dbReference>
<dbReference type="RefSeq" id="WP_012593620.1">
    <property type="nucleotide sequence ID" value="NC_011726.1"/>
</dbReference>
<dbReference type="SMR" id="B7K236"/>
<dbReference type="STRING" id="41431.PCC8801_0240"/>
<dbReference type="KEGG" id="cyp:PCC8801_0240"/>
<dbReference type="eggNOG" id="COG0094">
    <property type="taxonomic scope" value="Bacteria"/>
</dbReference>
<dbReference type="HOGENOM" id="CLU_061015_2_1_3"/>
<dbReference type="OrthoDB" id="9806626at2"/>
<dbReference type="Proteomes" id="UP000008204">
    <property type="component" value="Chromosome"/>
</dbReference>
<dbReference type="GO" id="GO:1990904">
    <property type="term" value="C:ribonucleoprotein complex"/>
    <property type="evidence" value="ECO:0007669"/>
    <property type="project" value="UniProtKB-KW"/>
</dbReference>
<dbReference type="GO" id="GO:0005840">
    <property type="term" value="C:ribosome"/>
    <property type="evidence" value="ECO:0007669"/>
    <property type="project" value="UniProtKB-KW"/>
</dbReference>
<dbReference type="GO" id="GO:0019843">
    <property type="term" value="F:rRNA binding"/>
    <property type="evidence" value="ECO:0007669"/>
    <property type="project" value="UniProtKB-UniRule"/>
</dbReference>
<dbReference type="GO" id="GO:0003735">
    <property type="term" value="F:structural constituent of ribosome"/>
    <property type="evidence" value="ECO:0007669"/>
    <property type="project" value="InterPro"/>
</dbReference>
<dbReference type="GO" id="GO:0000049">
    <property type="term" value="F:tRNA binding"/>
    <property type="evidence" value="ECO:0007669"/>
    <property type="project" value="UniProtKB-UniRule"/>
</dbReference>
<dbReference type="GO" id="GO:0006412">
    <property type="term" value="P:translation"/>
    <property type="evidence" value="ECO:0007669"/>
    <property type="project" value="UniProtKB-UniRule"/>
</dbReference>
<dbReference type="FunFam" id="3.30.1440.10:FF:000001">
    <property type="entry name" value="50S ribosomal protein L5"/>
    <property type="match status" value="1"/>
</dbReference>
<dbReference type="Gene3D" id="3.30.1440.10">
    <property type="match status" value="1"/>
</dbReference>
<dbReference type="HAMAP" id="MF_01333_B">
    <property type="entry name" value="Ribosomal_uL5_B"/>
    <property type="match status" value="1"/>
</dbReference>
<dbReference type="InterPro" id="IPR002132">
    <property type="entry name" value="Ribosomal_uL5"/>
</dbReference>
<dbReference type="InterPro" id="IPR020930">
    <property type="entry name" value="Ribosomal_uL5_bac-type"/>
</dbReference>
<dbReference type="InterPro" id="IPR031309">
    <property type="entry name" value="Ribosomal_uL5_C"/>
</dbReference>
<dbReference type="InterPro" id="IPR020929">
    <property type="entry name" value="Ribosomal_uL5_CS"/>
</dbReference>
<dbReference type="InterPro" id="IPR022803">
    <property type="entry name" value="Ribosomal_uL5_dom_sf"/>
</dbReference>
<dbReference type="InterPro" id="IPR031310">
    <property type="entry name" value="Ribosomal_uL5_N"/>
</dbReference>
<dbReference type="NCBIfam" id="NF000585">
    <property type="entry name" value="PRK00010.1"/>
    <property type="match status" value="1"/>
</dbReference>
<dbReference type="PANTHER" id="PTHR11994">
    <property type="entry name" value="60S RIBOSOMAL PROTEIN L11-RELATED"/>
    <property type="match status" value="1"/>
</dbReference>
<dbReference type="Pfam" id="PF00281">
    <property type="entry name" value="Ribosomal_L5"/>
    <property type="match status" value="1"/>
</dbReference>
<dbReference type="Pfam" id="PF00673">
    <property type="entry name" value="Ribosomal_L5_C"/>
    <property type="match status" value="1"/>
</dbReference>
<dbReference type="PIRSF" id="PIRSF002161">
    <property type="entry name" value="Ribosomal_L5"/>
    <property type="match status" value="1"/>
</dbReference>
<dbReference type="SUPFAM" id="SSF55282">
    <property type="entry name" value="RL5-like"/>
    <property type="match status" value="1"/>
</dbReference>
<dbReference type="PROSITE" id="PS00358">
    <property type="entry name" value="RIBOSOMAL_L5"/>
    <property type="match status" value="1"/>
</dbReference>
<keyword id="KW-1185">Reference proteome</keyword>
<keyword id="KW-0687">Ribonucleoprotein</keyword>
<keyword id="KW-0689">Ribosomal protein</keyword>
<keyword id="KW-0694">RNA-binding</keyword>
<keyword id="KW-0699">rRNA-binding</keyword>
<keyword id="KW-0820">tRNA-binding</keyword>